<organism>
    <name type="scientific">Gallus gallus</name>
    <name type="common">Chicken</name>
    <dbReference type="NCBI Taxonomy" id="9031"/>
    <lineage>
        <taxon>Eukaryota</taxon>
        <taxon>Metazoa</taxon>
        <taxon>Chordata</taxon>
        <taxon>Craniata</taxon>
        <taxon>Vertebrata</taxon>
        <taxon>Euteleostomi</taxon>
        <taxon>Archelosauria</taxon>
        <taxon>Archosauria</taxon>
        <taxon>Dinosauria</taxon>
        <taxon>Saurischia</taxon>
        <taxon>Theropoda</taxon>
        <taxon>Coelurosauria</taxon>
        <taxon>Aves</taxon>
        <taxon>Neognathae</taxon>
        <taxon>Galloanserae</taxon>
        <taxon>Galliformes</taxon>
        <taxon>Phasianidae</taxon>
        <taxon>Phasianinae</taxon>
        <taxon>Gallus</taxon>
    </lineage>
</organism>
<evidence type="ECO:0000250" key="1">
    <source>
        <dbReference type="UniProtKB" id="Q12857"/>
    </source>
</evidence>
<evidence type="ECO:0000255" key="2">
    <source>
        <dbReference type="PROSITE-ProRule" id="PRU00436"/>
    </source>
</evidence>
<evidence type="ECO:0000256" key="3">
    <source>
        <dbReference type="SAM" id="MobiDB-lite"/>
    </source>
</evidence>
<accession>P17923</accession>
<proteinExistence type="evidence at protein level"/>
<gene>
    <name type="primary">NFIA</name>
    <name type="synonym">NFI-A</name>
</gene>
<name>NFIA_CHICK</name>
<reference key="1">
    <citation type="journal article" date="1990" name="Nucleic Acids Res.">
        <title>Chicken NFI/TGGCA proteins are encoded by at least three independent genes: NFI-A, NFI-B and NFI-C with homologues in mammalian genomes.</title>
        <authorList>
            <person name="Rupp R.A.W."/>
            <person name="Kruse U."/>
            <person name="Multhaup G."/>
            <person name="Goebel U."/>
            <person name="Beyreuther K."/>
            <person name="Sippel A.E."/>
        </authorList>
    </citation>
    <scope>NUCLEOTIDE SEQUENCE [MRNA]</scope>
    <scope>PARTIAL PROTEIN SEQUENCE</scope>
    <source>
        <tissue>Embryo</tissue>
    </source>
</reference>
<feature type="chain" id="PRO_0000100194" description="Nuclear factor 1 A-type">
    <location>
        <begin position="1"/>
        <end position="522"/>
    </location>
</feature>
<feature type="DNA-binding region" description="CTF/NF-I" evidence="2">
    <location>
        <begin position="1"/>
        <end position="194"/>
    </location>
</feature>
<feature type="region of interest" description="Disordered" evidence="3">
    <location>
        <begin position="189"/>
        <end position="211"/>
    </location>
</feature>
<feature type="region of interest" description="Disordered" evidence="3">
    <location>
        <begin position="259"/>
        <end position="392"/>
    </location>
</feature>
<feature type="region of interest" description="Disordered" evidence="3">
    <location>
        <begin position="451"/>
        <end position="522"/>
    </location>
</feature>
<feature type="short sequence motif" description="9aaTAD" evidence="1">
    <location>
        <begin position="407"/>
        <end position="415"/>
    </location>
</feature>
<feature type="compositionally biased region" description="Low complexity" evidence="3">
    <location>
        <begin position="189"/>
        <end position="199"/>
    </location>
</feature>
<feature type="compositionally biased region" description="Low complexity" evidence="3">
    <location>
        <begin position="296"/>
        <end position="309"/>
    </location>
</feature>
<feature type="compositionally biased region" description="Low complexity" evidence="3">
    <location>
        <begin position="342"/>
        <end position="354"/>
    </location>
</feature>
<feature type="compositionally biased region" description="Polar residues" evidence="3">
    <location>
        <begin position="376"/>
        <end position="389"/>
    </location>
</feature>
<feature type="compositionally biased region" description="Pro residues" evidence="3">
    <location>
        <begin position="451"/>
        <end position="470"/>
    </location>
</feature>
<feature type="compositionally biased region" description="Low complexity" evidence="3">
    <location>
        <begin position="481"/>
        <end position="495"/>
    </location>
</feature>
<feature type="compositionally biased region" description="Polar residues" evidence="3">
    <location>
        <begin position="511"/>
        <end position="522"/>
    </location>
</feature>
<comment type="function">
    <text>Recognizes and binds the palindromic sequence 5'-TTGGCNNNNNGCCAA-3' present in viral and cellular promoters and in the origin of replication of adenovirus type 2. These proteins are individually capable of activating transcription and replication.</text>
</comment>
<comment type="subunit">
    <text>Binds DNA as a homodimer.</text>
</comment>
<comment type="subcellular location">
    <subcellularLocation>
        <location>Nucleus</location>
    </subcellularLocation>
</comment>
<comment type="alternative products">
    <event type="alternative splicing"/>
    <isoform>
        <id>P17923-1</id>
        <name>1</name>
        <sequence type="displayed"/>
    </isoform>
    <text>A number of isoforms are produced.</text>
</comment>
<comment type="domain">
    <text evidence="1">The 9aaTAD motif is a transactivation domain present in a large number of yeast and animal transcription factors.</text>
</comment>
<comment type="similarity">
    <text evidence="2">Belongs to the CTF/NF-I family.</text>
</comment>
<keyword id="KW-0010">Activator</keyword>
<keyword id="KW-0025">Alternative splicing</keyword>
<keyword id="KW-0903">Direct protein sequencing</keyword>
<keyword id="KW-0235">DNA replication</keyword>
<keyword id="KW-0238">DNA-binding</keyword>
<keyword id="KW-0539">Nucleus</keyword>
<keyword id="KW-1185">Reference proteome</keyword>
<keyword id="KW-0804">Transcription</keyword>
<keyword id="KW-0805">Transcription regulation</keyword>
<sequence length="522" mass="57474">MYSPLCLTQDEFHPFIEALLPHVRAFAYTWFNLQARKRKYFKKHEKRMSKEEERAVKDELLSEKPEVKQKWASRLLAKLRKDIRPEFREDFVLTVTGKKPPCCVLSNPDQKGKMRRIDCLRQADKVWRLDLVMVILFKGIPLESTDGERLVKSPQCSNPGLCVQPHHIGVSVKELDLYLAYFVHAADSSQSESPSQPSEADIKDQPENGHLGFQDSFVTSGVFSVTELVRVSQTPIAAGTGPNFSLSDLESSSYYSMSPGAMRRSLPSTSSTSSTKRIKSVEDEMDSPGEEPFYTSQGRSPGSGSQSSGWHEVEPGYLRNPEHRGALHGMPSPTALKKSEKSGFSSPSPSQTSSLGTAFTQHHRPVITGPRASPHATPSTLHFPTSPIIQQPGPYFSHPAIRYHPQETLKEFVQLVCPDAGQQAGQVGFLNPNGSSQGKVHNPFLPTPMLPPPPPPPMARPVPLPVPDTKPPTTSTEGGATSPTSPTYSTPSTSPANRFVSVGPRDPSFVNIPQQTQSWYLG</sequence>
<dbReference type="EMBL" id="X51486">
    <property type="protein sequence ID" value="CAA35853.1"/>
    <property type="molecule type" value="mRNA"/>
</dbReference>
<dbReference type="PIR" id="S09996">
    <property type="entry name" value="S09996"/>
</dbReference>
<dbReference type="RefSeq" id="XP_046778314.1">
    <molecule id="P17923-1"/>
    <property type="nucleotide sequence ID" value="XM_046922358.1"/>
</dbReference>
<dbReference type="RefSeq" id="XP_046800224.1">
    <molecule id="P17923-1"/>
    <property type="nucleotide sequence ID" value="XM_046944268.1"/>
</dbReference>
<dbReference type="SMR" id="P17923"/>
<dbReference type="FunCoup" id="P17923">
    <property type="interactions" value="267"/>
</dbReference>
<dbReference type="STRING" id="9031.ENSGALP00000049611"/>
<dbReference type="GlyGen" id="P17923">
    <property type="glycosylation" value="2 sites"/>
</dbReference>
<dbReference type="PaxDb" id="9031-ENSGALP00000017752"/>
<dbReference type="GeneID" id="396210"/>
<dbReference type="VEuPathDB" id="HostDB:geneid_396210"/>
<dbReference type="eggNOG" id="KOG3663">
    <property type="taxonomic scope" value="Eukaryota"/>
</dbReference>
<dbReference type="InParanoid" id="P17923"/>
<dbReference type="OrthoDB" id="10055441at2759"/>
<dbReference type="PhylomeDB" id="P17923"/>
<dbReference type="PRO" id="PR:P17923"/>
<dbReference type="Proteomes" id="UP000000539">
    <property type="component" value="Chromosome 8"/>
</dbReference>
<dbReference type="Bgee" id="ENSGALG00000010924">
    <property type="expression patterns" value="Expressed in cerebellum and 11 other cell types or tissues"/>
</dbReference>
<dbReference type="GO" id="GO:0005634">
    <property type="term" value="C:nucleus"/>
    <property type="evidence" value="ECO:0000318"/>
    <property type="project" value="GO_Central"/>
</dbReference>
<dbReference type="GO" id="GO:0000981">
    <property type="term" value="F:DNA-binding transcription factor activity, RNA polymerase II-specific"/>
    <property type="evidence" value="ECO:0000318"/>
    <property type="project" value="GO_Central"/>
</dbReference>
<dbReference type="GO" id="GO:0000978">
    <property type="term" value="F:RNA polymerase II cis-regulatory region sequence-specific DNA binding"/>
    <property type="evidence" value="ECO:0000318"/>
    <property type="project" value="GO_Central"/>
</dbReference>
<dbReference type="GO" id="GO:0006260">
    <property type="term" value="P:DNA replication"/>
    <property type="evidence" value="ECO:0007669"/>
    <property type="project" value="UniProtKB-KW"/>
</dbReference>
<dbReference type="GO" id="GO:0045893">
    <property type="term" value="P:positive regulation of DNA-templated transcription"/>
    <property type="evidence" value="ECO:0007669"/>
    <property type="project" value="UniProtKB-ARBA"/>
</dbReference>
<dbReference type="GO" id="GO:0006357">
    <property type="term" value="P:regulation of transcription by RNA polymerase II"/>
    <property type="evidence" value="ECO:0000318"/>
    <property type="project" value="GO_Central"/>
</dbReference>
<dbReference type="InterPro" id="IPR000647">
    <property type="entry name" value="CTF/NFI"/>
</dbReference>
<dbReference type="InterPro" id="IPR020604">
    <property type="entry name" value="CTF/NFI_DNA-bd-dom"/>
</dbReference>
<dbReference type="InterPro" id="IPR019739">
    <property type="entry name" value="CTF/NFI_DNA-bd_CS"/>
</dbReference>
<dbReference type="InterPro" id="IPR019548">
    <property type="entry name" value="CTF/NFI_DNA-bd_N"/>
</dbReference>
<dbReference type="InterPro" id="IPR003619">
    <property type="entry name" value="MAD_homology1_Dwarfin-type"/>
</dbReference>
<dbReference type="PANTHER" id="PTHR11492:SF6">
    <property type="entry name" value="NUCLEAR FACTOR 1 A-TYPE"/>
    <property type="match status" value="1"/>
</dbReference>
<dbReference type="PANTHER" id="PTHR11492">
    <property type="entry name" value="NUCLEAR FACTOR I"/>
    <property type="match status" value="1"/>
</dbReference>
<dbReference type="Pfam" id="PF00859">
    <property type="entry name" value="CTF_NFI"/>
    <property type="match status" value="1"/>
</dbReference>
<dbReference type="Pfam" id="PF03165">
    <property type="entry name" value="MH1"/>
    <property type="match status" value="1"/>
</dbReference>
<dbReference type="Pfam" id="PF10524">
    <property type="entry name" value="NfI_DNAbd_pre-N"/>
    <property type="match status" value="1"/>
</dbReference>
<dbReference type="SMART" id="SM00523">
    <property type="entry name" value="DWA"/>
    <property type="match status" value="1"/>
</dbReference>
<dbReference type="PROSITE" id="PS00349">
    <property type="entry name" value="CTF_NFI_1"/>
    <property type="match status" value="1"/>
</dbReference>
<dbReference type="PROSITE" id="PS51080">
    <property type="entry name" value="CTF_NFI_2"/>
    <property type="match status" value="1"/>
</dbReference>
<protein>
    <recommendedName>
        <fullName>Nuclear factor 1 A-type</fullName>
        <shortName>NF1-A</shortName>
        <shortName>Nuclear factor 1/A</shortName>
    </recommendedName>
    <alternativeName>
        <fullName>CCAAT-box-binding transcription factor</fullName>
        <shortName>CTF</shortName>
    </alternativeName>
    <alternativeName>
        <fullName>Nuclear factor I/A</fullName>
        <shortName>NF-I/A</shortName>
        <shortName>NFI-A</shortName>
    </alternativeName>
    <alternativeName>
        <fullName>TGGCA-binding protein</fullName>
    </alternativeName>
</protein>